<dbReference type="EMBL" id="BC040037">
    <property type="status" value="NOT_ANNOTATED_CDS"/>
    <property type="molecule type" value="mRNA"/>
</dbReference>
<dbReference type="EMBL" id="BC050563">
    <property type="protein sequence ID" value="AAH50563.1"/>
    <property type="molecule type" value="mRNA"/>
</dbReference>
<dbReference type="EMBL" id="AC135457">
    <property type="status" value="NOT_ANNOTATED_CDS"/>
    <property type="molecule type" value="Genomic_DNA"/>
</dbReference>
<dbReference type="CCDS" id="CCDS47274.1">
    <molecule id="Q86W54-1"/>
</dbReference>
<dbReference type="RefSeq" id="NP_919272.1">
    <molecule id="Q86W54-1"/>
    <property type="nucleotide sequence ID" value="NM_194296.2"/>
</dbReference>
<dbReference type="SMR" id="Q86W54"/>
<dbReference type="BioGRID" id="128415">
    <property type="interactions" value="52"/>
</dbReference>
<dbReference type="FunCoup" id="Q86W54">
    <property type="interactions" value="1453"/>
</dbReference>
<dbReference type="IntAct" id="Q86W54">
    <property type="interactions" value="58"/>
</dbReference>
<dbReference type="MINT" id="Q86W54"/>
<dbReference type="STRING" id="9606.ENSP00000414920"/>
<dbReference type="GlyGen" id="Q86W54">
    <property type="glycosylation" value="1 site, 1 O-linked glycan (1 site)"/>
</dbReference>
<dbReference type="iPTMnet" id="Q86W54"/>
<dbReference type="PhosphoSitePlus" id="Q86W54"/>
<dbReference type="BioMuta" id="SPATA24"/>
<dbReference type="DMDM" id="182701380"/>
<dbReference type="jPOST" id="Q86W54"/>
<dbReference type="MassIVE" id="Q86W54"/>
<dbReference type="PaxDb" id="9606-ENSP00000414920"/>
<dbReference type="PeptideAtlas" id="Q86W54"/>
<dbReference type="ProteomicsDB" id="70119">
    <molecule id="Q86W54-1"/>
</dbReference>
<dbReference type="ProteomicsDB" id="70120">
    <molecule id="Q86W54-2"/>
</dbReference>
<dbReference type="Pumba" id="Q86W54"/>
<dbReference type="Antibodypedia" id="45375">
    <property type="antibodies" value="23 antibodies from 11 providers"/>
</dbReference>
<dbReference type="DNASU" id="202051"/>
<dbReference type="Ensembl" id="ENST00000450845.7">
    <molecule id="Q86W54-1"/>
    <property type="protein sequence ID" value="ENSP00000414920.2"/>
    <property type="gene ID" value="ENSG00000170469.11"/>
</dbReference>
<dbReference type="Ensembl" id="ENST00000451821.6">
    <molecule id="Q86W54-2"/>
    <property type="protein sequence ID" value="ENSP00000400524.2"/>
    <property type="gene ID" value="ENSG00000170469.11"/>
</dbReference>
<dbReference type="GeneID" id="202051"/>
<dbReference type="KEGG" id="hsa:202051"/>
<dbReference type="MANE-Select" id="ENST00000450845.7">
    <property type="protein sequence ID" value="ENSP00000414920.2"/>
    <property type="RefSeq nucleotide sequence ID" value="NM_194296.2"/>
    <property type="RefSeq protein sequence ID" value="NP_919272.1"/>
</dbReference>
<dbReference type="UCSC" id="uc003lel.5">
    <molecule id="Q86W54-1"/>
    <property type="organism name" value="human"/>
</dbReference>
<dbReference type="AGR" id="HGNC:27322"/>
<dbReference type="CTD" id="202051"/>
<dbReference type="DisGeNET" id="202051"/>
<dbReference type="GeneCards" id="SPATA24"/>
<dbReference type="HGNC" id="HGNC:27322">
    <property type="gene designation" value="SPATA24"/>
</dbReference>
<dbReference type="HPA" id="ENSG00000170469">
    <property type="expression patterns" value="Tissue enriched (testis)"/>
</dbReference>
<dbReference type="MIM" id="621086">
    <property type="type" value="gene"/>
</dbReference>
<dbReference type="neXtProt" id="NX_Q86W54"/>
<dbReference type="OpenTargets" id="ENSG00000170469"/>
<dbReference type="PharmGKB" id="PA165660551"/>
<dbReference type="VEuPathDB" id="HostDB:ENSG00000170469"/>
<dbReference type="eggNOG" id="ENOG502S3HF">
    <property type="taxonomic scope" value="Eukaryota"/>
</dbReference>
<dbReference type="GeneTree" id="ENSGT00390000007817"/>
<dbReference type="HOGENOM" id="CLU_125524_0_0_1"/>
<dbReference type="InParanoid" id="Q86W54"/>
<dbReference type="OMA" id="HITKQED"/>
<dbReference type="OrthoDB" id="10047985at2759"/>
<dbReference type="PAN-GO" id="Q86W54">
    <property type="GO annotations" value="3 GO annotations based on evolutionary models"/>
</dbReference>
<dbReference type="PhylomeDB" id="Q86W54"/>
<dbReference type="TreeFam" id="TF338733"/>
<dbReference type="PathwayCommons" id="Q86W54"/>
<dbReference type="SignaLink" id="Q86W54"/>
<dbReference type="BioGRID-ORCS" id="202051">
    <property type="hits" value="10 hits in 1120 CRISPR screens"/>
</dbReference>
<dbReference type="GenomeRNAi" id="202051"/>
<dbReference type="Pharos" id="Q86W54">
    <property type="development level" value="Tdark"/>
</dbReference>
<dbReference type="PRO" id="PR:Q86W54"/>
<dbReference type="Proteomes" id="UP000005640">
    <property type="component" value="Chromosome 5"/>
</dbReference>
<dbReference type="RNAct" id="Q86W54">
    <property type="molecule type" value="protein"/>
</dbReference>
<dbReference type="Bgee" id="ENSG00000170469">
    <property type="expression patterns" value="Expressed in gingival epithelium and 141 other cell types or tissues"/>
</dbReference>
<dbReference type="ExpressionAtlas" id="Q86W54">
    <property type="expression patterns" value="baseline and differential"/>
</dbReference>
<dbReference type="GO" id="GO:0005737">
    <property type="term" value="C:cytoplasm"/>
    <property type="evidence" value="ECO:0000318"/>
    <property type="project" value="GO_Central"/>
</dbReference>
<dbReference type="GO" id="GO:0005829">
    <property type="term" value="C:cytosol"/>
    <property type="evidence" value="ECO:0000314"/>
    <property type="project" value="HPA"/>
</dbReference>
<dbReference type="GO" id="GO:0001673">
    <property type="term" value="C:male germ cell nucleus"/>
    <property type="evidence" value="ECO:0007669"/>
    <property type="project" value="Ensembl"/>
</dbReference>
<dbReference type="GO" id="GO:0005730">
    <property type="term" value="C:nucleolus"/>
    <property type="evidence" value="ECO:0007669"/>
    <property type="project" value="UniProtKB-SubCell"/>
</dbReference>
<dbReference type="GO" id="GO:0005654">
    <property type="term" value="C:nucleoplasm"/>
    <property type="evidence" value="ECO:0000314"/>
    <property type="project" value="HPA"/>
</dbReference>
<dbReference type="GO" id="GO:0005634">
    <property type="term" value="C:nucleus"/>
    <property type="evidence" value="ECO:0000318"/>
    <property type="project" value="GO_Central"/>
</dbReference>
<dbReference type="GO" id="GO:0003677">
    <property type="term" value="F:DNA binding"/>
    <property type="evidence" value="ECO:0000318"/>
    <property type="project" value="GO_Central"/>
</dbReference>
<dbReference type="GO" id="GO:0042802">
    <property type="term" value="F:identical protein binding"/>
    <property type="evidence" value="ECO:0007669"/>
    <property type="project" value="Ensembl"/>
</dbReference>
<dbReference type="GO" id="GO:0030154">
    <property type="term" value="P:cell differentiation"/>
    <property type="evidence" value="ECO:0007669"/>
    <property type="project" value="UniProtKB-KW"/>
</dbReference>
<dbReference type="GO" id="GO:0007283">
    <property type="term" value="P:spermatogenesis"/>
    <property type="evidence" value="ECO:0007669"/>
    <property type="project" value="UniProtKB-KW"/>
</dbReference>
<dbReference type="InterPro" id="IPR029176">
    <property type="entry name" value="SPATA24"/>
</dbReference>
<dbReference type="PANTHER" id="PTHR35155">
    <property type="entry name" value="SPERMATOGENESIS-ASSOCIATED PROTEIN 24"/>
    <property type="match status" value="1"/>
</dbReference>
<dbReference type="PANTHER" id="PTHR35155:SF1">
    <property type="entry name" value="SPERMATOGENESIS-ASSOCIATED PROTEIN 24"/>
    <property type="match status" value="1"/>
</dbReference>
<dbReference type="Pfam" id="PF15175">
    <property type="entry name" value="SPATA24"/>
    <property type="match status" value="1"/>
</dbReference>
<accession>Q86W54</accession>
<proteinExistence type="evidence at protein level"/>
<evidence type="ECO:0000250" key="1"/>
<evidence type="ECO:0000255" key="2"/>
<evidence type="ECO:0000256" key="3">
    <source>
        <dbReference type="SAM" id="MobiDB-lite"/>
    </source>
</evidence>
<evidence type="ECO:0000269" key="4">
    <source>
    </source>
</evidence>
<evidence type="ECO:0000303" key="5">
    <source>
    </source>
</evidence>
<evidence type="ECO:0000305" key="6"/>
<sequence length="205" mass="23587">MATPLGWSKAGSGSVCLALDQLRDVIESQEELIHQLRNVMVLQDENFVSKEEFQAVEKKLVEEKAAHAKTKVLLAKEEEKLQFALGEVEVLSKQLEKEKLAFEKALSSVKSKVLQESSKKDQLITKCNEIESHIIKQEDILNGKENEIKELQQVISQQKQIFRNHMSDFRIQKQQESYMAQVLDQKHKKASGTRQARSHQHPREK</sequence>
<name>SPA24_HUMAN</name>
<feature type="chain" id="PRO_0000328979" description="Spermatogenesis-associated protein 24">
    <location>
        <begin position="1"/>
        <end position="205"/>
    </location>
</feature>
<feature type="region of interest" description="Required for interaction with CBX5 and TBPL1" evidence="1">
    <location>
        <begin position="138"/>
        <end position="185"/>
    </location>
</feature>
<feature type="region of interest" description="Disordered" evidence="3">
    <location>
        <begin position="180"/>
        <end position="205"/>
    </location>
</feature>
<feature type="coiled-coil region" evidence="2">
    <location>
        <begin position="17"/>
        <end position="166"/>
    </location>
</feature>
<feature type="compositionally biased region" description="Basic residues" evidence="3">
    <location>
        <begin position="186"/>
        <end position="205"/>
    </location>
</feature>
<feature type="splice variant" id="VSP_032867" description="In isoform 2." evidence="5">
    <original>EIESHIIKQEDILNGKENEIKELQQVISQQKQIFRNHMSDFRIQKQQESYMAQVLDQKHKKASGTRQARSHQHPREK</original>
    <variation>GRREARALHHGYINGLFPNHPVPVSKAGFHSNTCPQLRIQAGPGGPHLRKGLKGPGRPRK</variation>
    <location>
        <begin position="129"/>
        <end position="205"/>
    </location>
</feature>
<gene>
    <name type="primary">SPATA24</name>
</gene>
<keyword id="KW-0025">Alternative splicing</keyword>
<keyword id="KW-0175">Coiled coil</keyword>
<keyword id="KW-0963">Cytoplasm</keyword>
<keyword id="KW-0217">Developmental protein</keyword>
<keyword id="KW-0221">Differentiation</keyword>
<keyword id="KW-0238">DNA-binding</keyword>
<keyword id="KW-0539">Nucleus</keyword>
<keyword id="KW-1267">Proteomics identification</keyword>
<keyword id="KW-1185">Reference proteome</keyword>
<keyword id="KW-0744">Spermatogenesis</keyword>
<keyword id="KW-0804">Transcription</keyword>
<keyword id="KW-0805">Transcription regulation</keyword>
<reference key="1">
    <citation type="journal article" date="2004" name="Genome Res.">
        <title>The status, quality, and expansion of the NIH full-length cDNA project: the Mammalian Gene Collection (MGC).</title>
        <authorList>
            <consortium name="The MGC Project Team"/>
        </authorList>
    </citation>
    <scope>NUCLEOTIDE SEQUENCE [LARGE SCALE MRNA] (ISOFORMS 1 AND 2)</scope>
    <source>
        <tissue>Brain</tissue>
        <tissue>Uterus</tissue>
    </source>
</reference>
<reference key="2">
    <citation type="journal article" date="2004" name="Nature">
        <title>The DNA sequence and comparative analysis of human chromosome 5.</title>
        <authorList>
            <person name="Schmutz J."/>
            <person name="Martin J."/>
            <person name="Terry A."/>
            <person name="Couronne O."/>
            <person name="Grimwood J."/>
            <person name="Lowry S."/>
            <person name="Gordon L.A."/>
            <person name="Scott D."/>
            <person name="Xie G."/>
            <person name="Huang W."/>
            <person name="Hellsten U."/>
            <person name="Tran-Gyamfi M."/>
            <person name="She X."/>
            <person name="Prabhakar S."/>
            <person name="Aerts A."/>
            <person name="Altherr M."/>
            <person name="Bajorek E."/>
            <person name="Black S."/>
            <person name="Branscomb E."/>
            <person name="Caoile C."/>
            <person name="Challacombe J.F."/>
            <person name="Chan Y.M."/>
            <person name="Denys M."/>
            <person name="Detter J.C."/>
            <person name="Escobar J."/>
            <person name="Flowers D."/>
            <person name="Fotopulos D."/>
            <person name="Glavina T."/>
            <person name="Gomez M."/>
            <person name="Gonzales E."/>
            <person name="Goodstein D."/>
            <person name="Grigoriev I."/>
            <person name="Groza M."/>
            <person name="Hammon N."/>
            <person name="Hawkins T."/>
            <person name="Haydu L."/>
            <person name="Israni S."/>
            <person name="Jett J."/>
            <person name="Kadner K."/>
            <person name="Kimball H."/>
            <person name="Kobayashi A."/>
            <person name="Lopez F."/>
            <person name="Lou Y."/>
            <person name="Martinez D."/>
            <person name="Medina C."/>
            <person name="Morgan J."/>
            <person name="Nandkeshwar R."/>
            <person name="Noonan J.P."/>
            <person name="Pitluck S."/>
            <person name="Pollard M."/>
            <person name="Predki P."/>
            <person name="Priest J."/>
            <person name="Ramirez L."/>
            <person name="Retterer J."/>
            <person name="Rodriguez A."/>
            <person name="Rogers S."/>
            <person name="Salamov A."/>
            <person name="Salazar A."/>
            <person name="Thayer N."/>
            <person name="Tice H."/>
            <person name="Tsai M."/>
            <person name="Ustaszewska A."/>
            <person name="Vo N."/>
            <person name="Wheeler J."/>
            <person name="Wu K."/>
            <person name="Yang J."/>
            <person name="Dickson M."/>
            <person name="Cheng J.-F."/>
            <person name="Eichler E.E."/>
            <person name="Olsen A."/>
            <person name="Pennacchio L.A."/>
            <person name="Rokhsar D.S."/>
            <person name="Richardson P."/>
            <person name="Lucas S.M."/>
            <person name="Myers R.M."/>
            <person name="Rubin E.M."/>
        </authorList>
    </citation>
    <scope>NUCLEOTIDE SEQUENCE [LARGE SCALE GENOMIC DNA]</scope>
</reference>
<reference key="3">
    <citation type="journal article" date="2009" name="BMC Biochem.">
        <title>TIPT2 and geminin interact with basal transcription factors to synergize in transcriptional regulation.</title>
        <authorList>
            <person name="Pitulescu M.E."/>
            <person name="Teichmann M."/>
            <person name="Luo L."/>
            <person name="Kessel M."/>
        </authorList>
    </citation>
    <scope>SUBCELLULAR LOCATION</scope>
</reference>
<comment type="function">
    <text evidence="1">Binds DNA with high affinity but does not bind to TATA boxes. Synergises with GMNN and TBP in activation of TATA box-containing promoters and with GMNN and TBPL1 in activation of the NF1 TATA-less promoter. May play a role in cytoplasm movement and removal during spermiogenesis (By similarity).</text>
</comment>
<comment type="subunit">
    <text evidence="1">Homodimer. Interacts with CBX3, CBX5, GMNN, GTF2B, TBPL1 and the polycomb proteins PHCF2, RNF2 and SCMH1 but not with CBX1 or PCGF2 (By similarity).</text>
</comment>
<comment type="interaction">
    <interactant intactId="EBI-3916986">
        <id>Q86W54</id>
    </interactant>
    <interactant intactId="EBI-739580">
        <id>Q13137</id>
        <label>CALCOCO2</label>
    </interactant>
    <organismsDiffer>false</organismsDiffer>
    <experiments>3</experiments>
</comment>
<comment type="interaction">
    <interactant intactId="EBI-3916986">
        <id>Q86W54</id>
    </interactant>
    <interactant intactId="EBI-739498">
        <id>Q9P209</id>
        <label>CEP72</label>
    </interactant>
    <organismsDiffer>false</organismsDiffer>
    <experiments>5</experiments>
</comment>
<comment type="interaction">
    <interactant intactId="EBI-3916986">
        <id>Q86W54</id>
    </interactant>
    <interactant intactId="EBI-948001">
        <id>Q15323</id>
        <label>KRT31</label>
    </interactant>
    <organismsDiffer>false</organismsDiffer>
    <experiments>3</experiments>
</comment>
<comment type="interaction">
    <interactant intactId="EBI-3916986">
        <id>Q86W54</id>
    </interactant>
    <interactant intactId="EBI-10172511">
        <id>Q9BYR5</id>
        <label>KRTAP4-2</label>
    </interactant>
    <organismsDiffer>false</organismsDiffer>
    <experiments>3</experiments>
</comment>
<comment type="interaction">
    <interactant intactId="EBI-3916986">
        <id>Q86W54</id>
    </interactant>
    <interactant intactId="EBI-741037">
        <id>Q9BRK4</id>
        <label>LZTS2</label>
    </interactant>
    <organismsDiffer>false</organismsDiffer>
    <experiments>3</experiments>
</comment>
<comment type="interaction">
    <interactant intactId="EBI-3916986">
        <id>Q86W54</id>
    </interactant>
    <interactant intactId="EBI-10172526">
        <id>Q9UJV3-2</id>
        <label>MID2</label>
    </interactant>
    <organismsDiffer>false</organismsDiffer>
    <experiments>3</experiments>
</comment>
<comment type="interaction">
    <interactant intactId="EBI-12041693">
        <id>Q86W54-2</id>
    </interactant>
    <interactant intactId="EBI-747082">
        <id>Q9NSA3</id>
        <label>CTNNBIP1</label>
    </interactant>
    <organismsDiffer>false</organismsDiffer>
    <experiments>3</experiments>
</comment>
<comment type="interaction">
    <interactant intactId="EBI-12041693">
        <id>Q86W54-2</id>
    </interactant>
    <interactant intactId="EBI-3867333">
        <id>A8MQ03</id>
        <label>CYSRT1</label>
    </interactant>
    <organismsDiffer>false</organismsDiffer>
    <experiments>3</experiments>
</comment>
<comment type="interaction">
    <interactant intactId="EBI-12041693">
        <id>Q86W54-2</id>
    </interactant>
    <interactant intactId="EBI-10976677">
        <id>G5E9A7</id>
        <label>DMWD</label>
    </interactant>
    <organismsDiffer>false</organismsDiffer>
    <experiments>3</experiments>
</comment>
<comment type="interaction">
    <interactant intactId="EBI-12041693">
        <id>Q86W54-2</id>
    </interactant>
    <interactant intactId="EBI-743414">
        <id>O95967</id>
        <label>EFEMP2</label>
    </interactant>
    <organismsDiffer>false</organismsDiffer>
    <experiments>3</experiments>
</comment>
<comment type="interaction">
    <interactant intactId="EBI-12041693">
        <id>Q86W54-2</id>
    </interactant>
    <interactant intactId="EBI-348399">
        <id>P22607</id>
        <label>FGFR3</label>
    </interactant>
    <organismsDiffer>false</organismsDiffer>
    <experiments>3</experiments>
</comment>
<comment type="interaction">
    <interactant intactId="EBI-12041693">
        <id>Q86W54-2</id>
    </interactant>
    <interactant intactId="EBI-351506">
        <id>P06396</id>
        <label>GSN</label>
    </interactant>
    <organismsDiffer>false</organismsDiffer>
    <experiments>3</experiments>
</comment>
<comment type="interaction">
    <interactant intactId="EBI-12041693">
        <id>Q86W54-2</id>
    </interactant>
    <interactant intactId="EBI-350145">
        <id>P01112</id>
        <label>HRAS</label>
    </interactant>
    <organismsDiffer>false</organismsDiffer>
    <experiments>3</experiments>
</comment>
<comment type="interaction">
    <interactant intactId="EBI-12041693">
        <id>Q86W54-2</id>
    </interactant>
    <interactant intactId="EBI-10172290">
        <id>P60409</id>
        <label>KRTAP10-7</label>
    </interactant>
    <organismsDiffer>false</organismsDiffer>
    <experiments>3</experiments>
</comment>
<comment type="interaction">
    <interactant intactId="EBI-12041693">
        <id>Q86W54-2</id>
    </interactant>
    <interactant intactId="EBI-10171774">
        <id>P60410</id>
        <label>KRTAP10-8</label>
    </interactant>
    <organismsDiffer>false</organismsDiffer>
    <experiments>3</experiments>
</comment>
<comment type="interaction">
    <interactant intactId="EBI-12041693">
        <id>Q86W54-2</id>
    </interactant>
    <interactant intactId="EBI-1050743">
        <id>P31153</id>
        <label>MAT2A</label>
    </interactant>
    <organismsDiffer>false</organismsDiffer>
    <experiments>3</experiments>
</comment>
<comment type="interaction">
    <interactant intactId="EBI-12041693">
        <id>Q86W54-2</id>
    </interactant>
    <interactant intactId="EBI-724076">
        <id>Q99750</id>
        <label>MDFI</label>
    </interactant>
    <organismsDiffer>false</organismsDiffer>
    <experiments>3</experiments>
</comment>
<comment type="interaction">
    <interactant intactId="EBI-12041693">
        <id>Q86W54-2</id>
    </interactant>
    <interactant intactId="EBI-22310682">
        <id>P0DPK4</id>
        <label>NOTCH2NLC</label>
    </interactant>
    <organismsDiffer>false</organismsDiffer>
    <experiments>3</experiments>
</comment>
<comment type="interaction">
    <interactant intactId="EBI-12041693">
        <id>Q86W54-2</id>
    </interactant>
    <interactant intactId="EBI-536879">
        <id>O43482</id>
        <label>OIP5</label>
    </interactant>
    <organismsDiffer>false</organismsDiffer>
    <experiments>3</experiments>
</comment>
<comment type="interaction">
    <interactant intactId="EBI-12041693">
        <id>Q86W54-2</id>
    </interactant>
    <interactant intactId="EBI-473160">
        <id>Q8N2W9</id>
        <label>PIAS4</label>
    </interactant>
    <organismsDiffer>false</organismsDiffer>
    <experiments>3</experiments>
</comment>
<comment type="interaction">
    <interactant intactId="EBI-12041693">
        <id>Q86W54-2</id>
    </interactant>
    <interactant intactId="EBI-742388">
        <id>Q9H8W4</id>
        <label>PLEKHF2</label>
    </interactant>
    <organismsDiffer>false</organismsDiffer>
    <experiments>3</experiments>
</comment>
<comment type="interaction">
    <interactant intactId="EBI-12041693">
        <id>Q86W54-2</id>
    </interactant>
    <interactant intactId="EBI-5235340">
        <id>Q7Z699</id>
        <label>SPRED1</label>
    </interactant>
    <organismsDiffer>false</organismsDiffer>
    <experiments>3</experiments>
</comment>
<comment type="interaction">
    <interactant intactId="EBI-12041693">
        <id>Q86W54-2</id>
    </interactant>
    <interactant intactId="EBI-12806590">
        <id>Q86WV8</id>
        <label>TSC1</label>
    </interactant>
    <organismsDiffer>false</organismsDiffer>
    <experiments>3</experiments>
</comment>
<comment type="interaction">
    <interactant intactId="EBI-12041693">
        <id>Q86W54-2</id>
    </interactant>
    <interactant intactId="EBI-741480">
        <id>Q9UMX0</id>
        <label>UBQLN1</label>
    </interactant>
    <organismsDiffer>false</organismsDiffer>
    <experiments>3</experiments>
</comment>
<comment type="interaction">
    <interactant intactId="EBI-12041693">
        <id>Q86W54-2</id>
    </interactant>
    <interactant intactId="EBI-25900580">
        <id>Q9Y649</id>
    </interactant>
    <organismsDiffer>false</organismsDiffer>
    <experiments>3</experiments>
</comment>
<comment type="subcellular location">
    <subcellularLocation>
        <location evidence="4">Cytoplasm</location>
    </subcellularLocation>
    <subcellularLocation>
        <location evidence="4">Nucleus</location>
        <location evidence="4">Nucleolus</location>
    </subcellularLocation>
    <subcellularLocation>
        <location evidence="4">Nucleus</location>
        <location evidence="4">Nucleoplasm</location>
    </subcellularLocation>
    <text evidence="1">Associated with chromatin.</text>
</comment>
<comment type="alternative products">
    <event type="alternative splicing"/>
    <isoform>
        <id>Q86W54-1</id>
        <name>1</name>
        <sequence type="displayed"/>
    </isoform>
    <isoform>
        <id>Q86W54-2</id>
        <name>2</name>
        <sequence type="described" ref="VSP_032867"/>
    </isoform>
</comment>
<comment type="similarity">
    <text evidence="6">Belongs to the SPATA24 family.</text>
</comment>
<protein>
    <recommendedName>
        <fullName>Spermatogenesis-associated protein 24</fullName>
    </recommendedName>
    <alternativeName>
        <fullName>Testis protein T6441 homolog</fullName>
    </alternativeName>
</protein>
<organism>
    <name type="scientific">Homo sapiens</name>
    <name type="common">Human</name>
    <dbReference type="NCBI Taxonomy" id="9606"/>
    <lineage>
        <taxon>Eukaryota</taxon>
        <taxon>Metazoa</taxon>
        <taxon>Chordata</taxon>
        <taxon>Craniata</taxon>
        <taxon>Vertebrata</taxon>
        <taxon>Euteleostomi</taxon>
        <taxon>Mammalia</taxon>
        <taxon>Eutheria</taxon>
        <taxon>Euarchontoglires</taxon>
        <taxon>Primates</taxon>
        <taxon>Haplorrhini</taxon>
        <taxon>Catarrhini</taxon>
        <taxon>Hominidae</taxon>
        <taxon>Homo</taxon>
    </lineage>
</organism>